<feature type="chain" id="PRO_0000065920" description="Protein VraX">
    <location>
        <begin position="1"/>
        <end position="55"/>
    </location>
</feature>
<protein>
    <recommendedName>
        <fullName>Protein VraX</fullName>
    </recommendedName>
</protein>
<dbReference type="EMBL" id="CP000046">
    <property type="protein sequence ID" value="AAW37734.1"/>
    <property type="molecule type" value="Genomic_DNA"/>
</dbReference>
<dbReference type="RefSeq" id="WP_000587958.1">
    <property type="nucleotide sequence ID" value="NZ_JBGOFO010000005.1"/>
</dbReference>
<dbReference type="GeneID" id="98344911"/>
<dbReference type="KEGG" id="sac:SACOL0625"/>
<dbReference type="HOGENOM" id="CLU_212227_0_0_9"/>
<dbReference type="Proteomes" id="UP000000530">
    <property type="component" value="Chromosome"/>
</dbReference>
<dbReference type="InterPro" id="IPR035374">
    <property type="entry name" value="VraX"/>
</dbReference>
<dbReference type="Pfam" id="PF17412">
    <property type="entry name" value="VraX"/>
    <property type="match status" value="1"/>
</dbReference>
<proteinExistence type="predicted"/>
<gene>
    <name type="primary">vraX</name>
    <name type="ordered locus">SACOL0625</name>
</gene>
<accession>Q5HI97</accession>
<sequence>MIIYRQYHHEGAPVYEIITKTFQHVSIKCDDSFSDTEIFKLLSLLQDDIDHMKVS</sequence>
<name>VRAX_STAAC</name>
<organism>
    <name type="scientific">Staphylococcus aureus (strain COL)</name>
    <dbReference type="NCBI Taxonomy" id="93062"/>
    <lineage>
        <taxon>Bacteria</taxon>
        <taxon>Bacillati</taxon>
        <taxon>Bacillota</taxon>
        <taxon>Bacilli</taxon>
        <taxon>Bacillales</taxon>
        <taxon>Staphylococcaceae</taxon>
        <taxon>Staphylococcus</taxon>
    </lineage>
</organism>
<reference key="1">
    <citation type="journal article" date="2005" name="J. Bacteriol.">
        <title>Insights on evolution of virulence and resistance from the complete genome analysis of an early methicillin-resistant Staphylococcus aureus strain and a biofilm-producing methicillin-resistant Staphylococcus epidermidis strain.</title>
        <authorList>
            <person name="Gill S.R."/>
            <person name="Fouts D.E."/>
            <person name="Archer G.L."/>
            <person name="Mongodin E.F."/>
            <person name="DeBoy R.T."/>
            <person name="Ravel J."/>
            <person name="Paulsen I.T."/>
            <person name="Kolonay J.F."/>
            <person name="Brinkac L.M."/>
            <person name="Beanan M.J."/>
            <person name="Dodson R.J."/>
            <person name="Daugherty S.C."/>
            <person name="Madupu R."/>
            <person name="Angiuoli S.V."/>
            <person name="Durkin A.S."/>
            <person name="Haft D.H."/>
            <person name="Vamathevan J.J."/>
            <person name="Khouri H."/>
            <person name="Utterback T.R."/>
            <person name="Lee C."/>
            <person name="Dimitrov G."/>
            <person name="Jiang L."/>
            <person name="Qin H."/>
            <person name="Weidman J."/>
            <person name="Tran K."/>
            <person name="Kang K.H."/>
            <person name="Hance I.R."/>
            <person name="Nelson K.E."/>
            <person name="Fraser C.M."/>
        </authorList>
    </citation>
    <scope>NUCLEOTIDE SEQUENCE [LARGE SCALE GENOMIC DNA]</scope>
    <source>
        <strain>COL</strain>
    </source>
</reference>